<evidence type="ECO:0000250" key="1">
    <source>
        <dbReference type="UniProtKB" id="P03081"/>
    </source>
</evidence>
<evidence type="ECO:0000305" key="2"/>
<keyword id="KW-0010">Activator</keyword>
<keyword id="KW-0025">Alternative splicing</keyword>
<keyword id="KW-0244">Early protein</keyword>
<keyword id="KW-1035">Host cytoplasm</keyword>
<keyword id="KW-1048">Host nucleus</keyword>
<keyword id="KW-0945">Host-virus interaction</keyword>
<keyword id="KW-0553">Oncogene</keyword>
<keyword id="KW-0597">Phosphoprotein</keyword>
<keyword id="KW-1185">Reference proteome</keyword>
<keyword id="KW-0804">Transcription</keyword>
<keyword id="KW-0805">Transcription regulation</keyword>
<sequence>MELTSEEYEELRGLLGTPDIGNADTLKKAFLKACKVHHPDKGGNEEAMKRLLYLYNKAKIAASATTSQVWYFLIIGYISLKNKNIYLPKIFWLRFQNMAPHSGNSGGKNSIKALMSKICIVMRN</sequence>
<feature type="chain" id="PRO_0000115054" description="Small t antigen">
    <location>
        <begin position="1"/>
        <end position="124"/>
    </location>
</feature>
<feature type="domain" description="J">
    <location>
        <begin position="10"/>
        <end position="96"/>
    </location>
</feature>
<dbReference type="EMBL" id="D13942">
    <property type="protein sequence ID" value="BAA03041.1"/>
    <property type="molecule type" value="Genomic_DNA"/>
</dbReference>
<dbReference type="EMBL" id="S48204">
    <property type="protein sequence ID" value="AAB24091.1"/>
    <property type="status" value="ALT_SEQ"/>
    <property type="molecule type" value="mRNA"/>
</dbReference>
<dbReference type="PIR" id="JU0358">
    <property type="entry name" value="TVVPBJ"/>
</dbReference>
<dbReference type="RefSeq" id="NP_040789.1">
    <molecule id="P24852-1"/>
    <property type="nucleotide sequence ID" value="NC_001442.1"/>
</dbReference>
<dbReference type="SMR" id="P24852"/>
<dbReference type="GeneID" id="29031002"/>
<dbReference type="KEGG" id="vg:29031002"/>
<dbReference type="OrthoDB" id="14669at10239"/>
<dbReference type="Proteomes" id="UP000008476">
    <property type="component" value="Genome"/>
</dbReference>
<dbReference type="GO" id="GO:0030430">
    <property type="term" value="C:host cell cytoplasm"/>
    <property type="evidence" value="ECO:0007669"/>
    <property type="project" value="UniProtKB-SubCell"/>
</dbReference>
<dbReference type="GO" id="GO:0042025">
    <property type="term" value="C:host cell nucleus"/>
    <property type="evidence" value="ECO:0007669"/>
    <property type="project" value="UniProtKB-SubCell"/>
</dbReference>
<dbReference type="CDD" id="cd06257">
    <property type="entry name" value="DnaJ"/>
    <property type="match status" value="1"/>
</dbReference>
<dbReference type="Gene3D" id="1.10.287.110">
    <property type="entry name" value="DnaJ domain"/>
    <property type="match status" value="1"/>
</dbReference>
<dbReference type="InterPro" id="IPR001623">
    <property type="entry name" value="DnaJ_domain"/>
</dbReference>
<dbReference type="InterPro" id="IPR036869">
    <property type="entry name" value="J_dom_sf"/>
</dbReference>
<dbReference type="SMART" id="SM00271">
    <property type="entry name" value="DnaJ"/>
    <property type="match status" value="1"/>
</dbReference>
<dbReference type="SUPFAM" id="SSF46565">
    <property type="entry name" value="Chaperone J-domain"/>
    <property type="match status" value="1"/>
</dbReference>
<organismHost>
    <name type="scientific">Bos taurus</name>
    <name type="common">Bovine</name>
    <dbReference type="NCBI Taxonomy" id="9913"/>
</organismHost>
<accession>P24852</accession>
<accession>Q90052</accession>
<proteinExistence type="evidence at transcript level"/>
<organism>
    <name type="scientific">Bovine polyomavirus</name>
    <name type="common">BPyV</name>
    <name type="synonym">Bos taurus polyomavirus 1</name>
    <dbReference type="NCBI Taxonomy" id="1891754"/>
    <lineage>
        <taxon>Viruses</taxon>
        <taxon>Monodnaviria</taxon>
        <taxon>Shotokuvirae</taxon>
        <taxon>Cossaviricota</taxon>
        <taxon>Papovaviricetes</taxon>
        <taxon>Sepolyvirales</taxon>
        <taxon>Polyomaviridae</taxon>
        <taxon>Epsilonpolyomavirus</taxon>
    </lineage>
</organism>
<name>ST_POVBO</name>
<reference key="1">
    <citation type="journal article" date="1990" name="J. Gen. Virol.">
        <title>The complete nucleotide sequence of bovine polyomavirus.</title>
        <authorList>
            <person name="Schuurman R."/>
            <person name="Sol C."/>
            <person name="van der Noordaa J."/>
        </authorList>
    </citation>
    <scope>NUCLEOTIDE SEQUENCE [GENOMIC DNA]</scope>
</reference>
<reference key="2">
    <citation type="journal article" date="1992" name="J. Gen. Virol.">
        <title>Analysis of splice sites in the early region of bovine polyomavirus: evidence for a unique pattern of large T mRNA splicing.</title>
        <authorList>
            <person name="Schuurman R."/>
            <person name="Jacobs M."/>
            <person name="van Strien A."/>
            <person name="van der Noordaa J."/>
            <person name="Sol C."/>
        </authorList>
    </citation>
    <scope>NUCLEOTIDE SEQUENCE [MRNA]</scope>
    <scope>ALTERNATIVE SPLICING</scope>
</reference>
<comment type="function">
    <text evidence="1">Promotes efficient viral genome replication by accelerating both G1 and S phase progression of the cell cycle.</text>
</comment>
<comment type="subcellular location">
    <subcellularLocation>
        <location>Host cytoplasm</location>
    </subcellularLocation>
    <subcellularLocation>
        <location evidence="1">Host nucleus</location>
    </subcellularLocation>
</comment>
<comment type="alternative products">
    <event type="alternative splicing"/>
    <isoform>
        <id>P24852-1</id>
        <name>Small t antigen</name>
        <sequence type="displayed"/>
    </isoform>
    <isoform>
        <id>P24851-1</id>
        <name>Large T antigen</name>
        <sequence type="external"/>
    </isoform>
</comment>
<comment type="domain">
    <text evidence="1">The common region of ST and LT proteins comprises the J domain. This domain is essential for multiple viral activities, including virion assembly, viral DNA replication, transformation and transcriptional activation. This domain is also required for cyclin A-transactivating activity of ST.</text>
</comment>
<comment type="sequence caution" evidence="2">
    <conflict type="erroneous gene model prediction">
        <sequence resource="EMBL-CDS" id="AAB24091"/>
    </conflict>
</comment>
<protein>
    <recommendedName>
        <fullName>Small t antigen</fullName>
        <shortName>ST</shortName>
        <shortName>ST-AG</shortName>
    </recommendedName>
</protein>